<feature type="chain" id="PRO_0000054241" description="Putative arginine/ornithine antiporter">
    <location>
        <begin position="1"/>
        <end position="460"/>
    </location>
</feature>
<feature type="topological domain" description="Cytoplasmic" evidence="4">
    <location>
        <begin position="1"/>
        <end position="4"/>
    </location>
</feature>
<feature type="transmembrane region" description="Helical" evidence="2">
    <location>
        <begin position="5"/>
        <end position="25"/>
    </location>
</feature>
<feature type="topological domain" description="Periplasmic" evidence="4">
    <location>
        <begin position="26"/>
        <end position="38"/>
    </location>
</feature>
<feature type="transmembrane region" description="Helical" evidence="2">
    <location>
        <begin position="39"/>
        <end position="59"/>
    </location>
</feature>
<feature type="topological domain" description="Cytoplasmic" evidence="4">
    <location>
        <begin position="60"/>
        <end position="92"/>
    </location>
</feature>
<feature type="transmembrane region" description="Helical" evidence="2">
    <location>
        <begin position="93"/>
        <end position="113"/>
    </location>
</feature>
<feature type="topological domain" description="Periplasmic" evidence="4">
    <location>
        <begin position="114"/>
        <end position="125"/>
    </location>
</feature>
<feature type="transmembrane region" description="Helical" evidence="2">
    <location>
        <begin position="126"/>
        <end position="146"/>
    </location>
</feature>
<feature type="topological domain" description="Cytoplasmic" evidence="4">
    <location>
        <begin position="147"/>
        <end position="157"/>
    </location>
</feature>
<feature type="transmembrane region" description="Helical" evidence="2">
    <location>
        <begin position="158"/>
        <end position="178"/>
    </location>
</feature>
<feature type="topological domain" description="Periplasmic" evidence="4">
    <location>
        <begin position="179"/>
        <end position="201"/>
    </location>
</feature>
<feature type="transmembrane region" description="Helical" evidence="2">
    <location>
        <begin position="202"/>
        <end position="222"/>
    </location>
</feature>
<feature type="topological domain" description="Cytoplasmic" evidence="4">
    <location>
        <begin position="223"/>
        <end position="235"/>
    </location>
</feature>
<feature type="transmembrane region" description="Helical" evidence="2">
    <location>
        <begin position="236"/>
        <end position="256"/>
    </location>
</feature>
<feature type="topological domain" description="Periplasmic" evidence="4">
    <location>
        <begin position="257"/>
        <end position="282"/>
    </location>
</feature>
<feature type="transmembrane region" description="Helical" evidence="2">
    <location>
        <begin position="283"/>
        <end position="303"/>
    </location>
</feature>
<feature type="topological domain" description="Cytoplasmic" evidence="4">
    <location>
        <begin position="304"/>
        <end position="331"/>
    </location>
</feature>
<feature type="transmembrane region" description="Helical" evidence="2">
    <location>
        <begin position="332"/>
        <end position="352"/>
    </location>
</feature>
<feature type="topological domain" description="Periplasmic" evidence="4">
    <location>
        <begin position="353"/>
        <end position="357"/>
    </location>
</feature>
<feature type="transmembrane region" description="Helical" evidence="2">
    <location>
        <begin position="358"/>
        <end position="378"/>
    </location>
</feature>
<feature type="topological domain" description="Cytoplasmic" evidence="4">
    <location>
        <begin position="379"/>
        <end position="384"/>
    </location>
</feature>
<feature type="transmembrane region" description="Helical" evidence="2">
    <location>
        <begin position="385"/>
        <end position="405"/>
    </location>
</feature>
<feature type="transmembrane region" description="Helical" evidence="2">
    <location>
        <begin position="406"/>
        <end position="426"/>
    </location>
</feature>
<feature type="topological domain" description="Cytoplasmic" evidence="4">
    <location>
        <begin position="427"/>
        <end position="439"/>
    </location>
</feature>
<feature type="transmembrane region" description="Helical" evidence="2">
    <location>
        <begin position="440"/>
        <end position="460"/>
    </location>
</feature>
<accession>P0AAE5</accession>
<accession>P77429</accession>
<proteinExistence type="evidence at protein level"/>
<organism>
    <name type="scientific">Escherichia coli (strain K12)</name>
    <dbReference type="NCBI Taxonomy" id="83333"/>
    <lineage>
        <taxon>Bacteria</taxon>
        <taxon>Pseudomonadati</taxon>
        <taxon>Pseudomonadota</taxon>
        <taxon>Gammaproteobacteria</taxon>
        <taxon>Enterobacterales</taxon>
        <taxon>Enterobacteriaceae</taxon>
        <taxon>Escherichia</taxon>
    </lineage>
</organism>
<comment type="function">
    <text evidence="1">Catalyzes electroneutral exchange between arginine and ornithine to allow high-efficiency energy conversion in the arginine deiminase pathway.</text>
</comment>
<comment type="catalytic activity">
    <reaction evidence="1">
        <text>L-ornithine(in) + L-arginine(out) = L-ornithine(out) + L-arginine(in)</text>
        <dbReference type="Rhea" id="RHEA:34991"/>
        <dbReference type="ChEBI" id="CHEBI:32682"/>
        <dbReference type="ChEBI" id="CHEBI:46911"/>
    </reaction>
    <physiologicalReaction direction="left-to-right" evidence="1">
        <dbReference type="Rhea" id="RHEA:34992"/>
    </physiologicalReaction>
</comment>
<comment type="subcellular location">
    <subcellularLocation>
        <location evidence="3">Cell inner membrane</location>
        <topology evidence="2">Multi-pass membrane protein</topology>
    </subcellularLocation>
</comment>
<comment type="similarity">
    <text evidence="4">Belongs to the amino acid-polyamine-organocation (APC) superfamily. Basic amino acid/polyamine antiporter (APA) (TC 2.A.3.2) family.</text>
</comment>
<name>ARCD_ECOLI</name>
<gene>
    <name type="primary">ydgI</name>
    <name type="ordered locus">b1605</name>
    <name type="ordered locus">JW1597</name>
</gene>
<reference key="1">
    <citation type="journal article" date="1996" name="DNA Res.">
        <title>A 570-kb DNA sequence of the Escherichia coli K-12 genome corresponding to the 28.0-40.1 min region on the linkage map.</title>
        <authorList>
            <person name="Aiba H."/>
            <person name="Baba T."/>
            <person name="Fujita K."/>
            <person name="Hayashi K."/>
            <person name="Inada T."/>
            <person name="Isono K."/>
            <person name="Itoh T."/>
            <person name="Kasai H."/>
            <person name="Kashimoto K."/>
            <person name="Kimura S."/>
            <person name="Kitakawa M."/>
            <person name="Kitagawa M."/>
            <person name="Makino K."/>
            <person name="Miki T."/>
            <person name="Mizobuchi K."/>
            <person name="Mori H."/>
            <person name="Mori T."/>
            <person name="Motomura K."/>
            <person name="Nakade S."/>
            <person name="Nakamura Y."/>
            <person name="Nashimoto H."/>
            <person name="Nishio Y."/>
            <person name="Oshima T."/>
            <person name="Saito N."/>
            <person name="Sampei G."/>
            <person name="Seki Y."/>
            <person name="Sivasundaram S."/>
            <person name="Tagami H."/>
            <person name="Takeda J."/>
            <person name="Takemoto K."/>
            <person name="Takeuchi Y."/>
            <person name="Wada C."/>
            <person name="Yamamoto Y."/>
            <person name="Horiuchi T."/>
        </authorList>
    </citation>
    <scope>NUCLEOTIDE SEQUENCE [LARGE SCALE GENOMIC DNA]</scope>
    <source>
        <strain>K12 / W3110 / ATCC 27325 / DSM 5911</strain>
    </source>
</reference>
<reference key="2">
    <citation type="journal article" date="1997" name="Science">
        <title>The complete genome sequence of Escherichia coli K-12.</title>
        <authorList>
            <person name="Blattner F.R."/>
            <person name="Plunkett G. III"/>
            <person name="Bloch C.A."/>
            <person name="Perna N.T."/>
            <person name="Burland V."/>
            <person name="Riley M."/>
            <person name="Collado-Vides J."/>
            <person name="Glasner J.D."/>
            <person name="Rode C.K."/>
            <person name="Mayhew G.F."/>
            <person name="Gregor J."/>
            <person name="Davis N.W."/>
            <person name="Kirkpatrick H.A."/>
            <person name="Goeden M.A."/>
            <person name="Rose D.J."/>
            <person name="Mau B."/>
            <person name="Shao Y."/>
        </authorList>
    </citation>
    <scope>NUCLEOTIDE SEQUENCE [LARGE SCALE GENOMIC DNA]</scope>
    <source>
        <strain>K12 / MG1655 / ATCC 47076</strain>
    </source>
</reference>
<reference key="3">
    <citation type="journal article" date="2006" name="Mol. Syst. Biol.">
        <title>Highly accurate genome sequences of Escherichia coli K-12 strains MG1655 and W3110.</title>
        <authorList>
            <person name="Hayashi K."/>
            <person name="Morooka N."/>
            <person name="Yamamoto Y."/>
            <person name="Fujita K."/>
            <person name="Isono K."/>
            <person name="Choi S."/>
            <person name="Ohtsubo E."/>
            <person name="Baba T."/>
            <person name="Wanner B.L."/>
            <person name="Mori H."/>
            <person name="Horiuchi T."/>
        </authorList>
    </citation>
    <scope>NUCLEOTIDE SEQUENCE [LARGE SCALE GENOMIC DNA]</scope>
    <source>
        <strain>K12 / W3110 / ATCC 27325 / DSM 5911</strain>
    </source>
</reference>
<reference key="4">
    <citation type="journal article" date="2005" name="Science">
        <title>Global topology analysis of the Escherichia coli inner membrane proteome.</title>
        <authorList>
            <person name="Daley D.O."/>
            <person name="Rapp M."/>
            <person name="Granseth E."/>
            <person name="Melen K."/>
            <person name="Drew D."/>
            <person name="von Heijne G."/>
        </authorList>
    </citation>
    <scope>SUBCELLULAR LOCATION</scope>
    <scope>TOPOLOGY [LARGE SCALE ANALYSIS]</scope>
    <source>
        <strain>K12 / MG1655 / ATCC 47076</strain>
    </source>
</reference>
<sequence>MEKKLGLSALTALVLSSMLGAGVFSLPQNMAAVASPAALLIGWGITGAGILLLAFAMLILTRIRPELDGGIFTYAREGFGELIGFCSAWGYWLCAVIANVSYLVIVFSALSFFTDTPELRLFGDGNTWQSIVGASALLWIVHFLILRGVQTAASINLVATLAKLLPLGLFVVLAMMMFKLDTFKLDFTGLALGVPVWEQVKNTMLITLWVFIGVEGAVVVSARARNKRDVGKATLLAVLSALGVYLLVTLLSLGVVARPELAEIRNPSMAGLMVEMMGPWGEIIIAAGLIVSVCGAYLSWTIMAAEVPFLAATHKAFPRIFARQNAQAAPSASLWLTNICVQICLVLIWLTGSDYNTLLTIASEMILVPYFLVGAFLLKIATRPLHKAVGVGACIYGLWLLYASGPMHLLLSVVLYAPGLLVFLYARKTHTHDNVLNRQEMVLIGMLLIASVPATWMLVG</sequence>
<dbReference type="EMBL" id="U00096">
    <property type="protein sequence ID" value="AAC74677.1"/>
    <property type="molecule type" value="Genomic_DNA"/>
</dbReference>
<dbReference type="EMBL" id="AP009048">
    <property type="protein sequence ID" value="BAA15343.1"/>
    <property type="molecule type" value="Genomic_DNA"/>
</dbReference>
<dbReference type="PIR" id="G64916">
    <property type="entry name" value="G64916"/>
</dbReference>
<dbReference type="RefSeq" id="NP_416122.1">
    <property type="nucleotide sequence ID" value="NC_000913.3"/>
</dbReference>
<dbReference type="RefSeq" id="WP_000412379.1">
    <property type="nucleotide sequence ID" value="NZ_STEB01000003.1"/>
</dbReference>
<dbReference type="SMR" id="P0AAE5"/>
<dbReference type="BioGRID" id="4259127">
    <property type="interactions" value="251"/>
</dbReference>
<dbReference type="DIP" id="DIP-48049N"/>
<dbReference type="FunCoup" id="P0AAE5">
    <property type="interactions" value="105"/>
</dbReference>
<dbReference type="IntAct" id="P0AAE5">
    <property type="interactions" value="1"/>
</dbReference>
<dbReference type="STRING" id="511145.b1605"/>
<dbReference type="TCDB" id="2.A.3.2.8">
    <property type="family name" value="the amino acid-polyamine-organocation (apc) family"/>
</dbReference>
<dbReference type="PaxDb" id="511145-b1605"/>
<dbReference type="EnsemblBacteria" id="AAC74677">
    <property type="protein sequence ID" value="AAC74677"/>
    <property type="gene ID" value="b1605"/>
</dbReference>
<dbReference type="GeneID" id="945159"/>
<dbReference type="KEGG" id="ecj:JW1597"/>
<dbReference type="KEGG" id="eco:b1605"/>
<dbReference type="KEGG" id="ecoc:C3026_09240"/>
<dbReference type="PATRIC" id="fig|1411691.4.peg.657"/>
<dbReference type="EchoBASE" id="EB3689"/>
<dbReference type="eggNOG" id="COG0531">
    <property type="taxonomic scope" value="Bacteria"/>
</dbReference>
<dbReference type="HOGENOM" id="CLU_007946_1_2_6"/>
<dbReference type="InParanoid" id="P0AAE5"/>
<dbReference type="OMA" id="FNSDNRV"/>
<dbReference type="OrthoDB" id="3185104at2"/>
<dbReference type="PhylomeDB" id="P0AAE5"/>
<dbReference type="BioCyc" id="EcoCyc:ARCD-MONOMER"/>
<dbReference type="PRO" id="PR:P0AAE5"/>
<dbReference type="Proteomes" id="UP000000625">
    <property type="component" value="Chromosome"/>
</dbReference>
<dbReference type="GO" id="GO:0005886">
    <property type="term" value="C:plasma membrane"/>
    <property type="evidence" value="ECO:0000255"/>
    <property type="project" value="EcoCyc"/>
</dbReference>
<dbReference type="GO" id="GO:0015297">
    <property type="term" value="F:antiporter activity"/>
    <property type="evidence" value="ECO:0007669"/>
    <property type="project" value="UniProtKB-KW"/>
</dbReference>
<dbReference type="GO" id="GO:0006865">
    <property type="term" value="P:amino acid transport"/>
    <property type="evidence" value="ECO:0007669"/>
    <property type="project" value="UniProtKB-KW"/>
</dbReference>
<dbReference type="FunFam" id="1.20.1740.10:FF:000012">
    <property type="entry name" value="Arginine/ornithine antiporter transporter"/>
    <property type="match status" value="1"/>
</dbReference>
<dbReference type="Gene3D" id="1.20.1740.10">
    <property type="entry name" value="Amino acid/polyamine transporter I"/>
    <property type="match status" value="1"/>
</dbReference>
<dbReference type="InterPro" id="IPR002293">
    <property type="entry name" value="AA/rel_permease1"/>
</dbReference>
<dbReference type="InterPro" id="IPR004754">
    <property type="entry name" value="Amino_acid_antiprt"/>
</dbReference>
<dbReference type="InterPro" id="IPR050367">
    <property type="entry name" value="APC_superfamily"/>
</dbReference>
<dbReference type="NCBIfam" id="TIGR00905">
    <property type="entry name" value="2A0302"/>
    <property type="match status" value="1"/>
</dbReference>
<dbReference type="PANTHER" id="PTHR42770">
    <property type="entry name" value="AMINO ACID TRANSPORTER-RELATED"/>
    <property type="match status" value="1"/>
</dbReference>
<dbReference type="PANTHER" id="PTHR42770:SF4">
    <property type="entry name" value="ARGININE_ORNITHINE ANTIPORTER-RELATED"/>
    <property type="match status" value="1"/>
</dbReference>
<dbReference type="Pfam" id="PF13520">
    <property type="entry name" value="AA_permease_2"/>
    <property type="match status" value="1"/>
</dbReference>
<dbReference type="PIRSF" id="PIRSF006060">
    <property type="entry name" value="AA_transporter"/>
    <property type="match status" value="1"/>
</dbReference>
<protein>
    <recommendedName>
        <fullName evidence="1">Putative arginine/ornithine antiporter</fullName>
    </recommendedName>
</protein>
<evidence type="ECO:0000250" key="1">
    <source>
        <dbReference type="UniProtKB" id="P18275"/>
    </source>
</evidence>
<evidence type="ECO:0000255" key="2"/>
<evidence type="ECO:0000269" key="3">
    <source>
    </source>
</evidence>
<evidence type="ECO:0000305" key="4"/>
<keyword id="KW-0029">Amino-acid transport</keyword>
<keyword id="KW-0050">Antiport</keyword>
<keyword id="KW-0997">Cell inner membrane</keyword>
<keyword id="KW-1003">Cell membrane</keyword>
<keyword id="KW-0472">Membrane</keyword>
<keyword id="KW-1185">Reference proteome</keyword>
<keyword id="KW-0812">Transmembrane</keyword>
<keyword id="KW-1133">Transmembrane helix</keyword>
<keyword id="KW-0813">Transport</keyword>